<comment type="similarity">
    <text evidence="1">Belongs to the UPF0434 family.</text>
</comment>
<feature type="chain" id="PRO_0000291142" description="UPF0434 protein Rmet_0534">
    <location>
        <begin position="1"/>
        <end position="69"/>
    </location>
</feature>
<reference key="1">
    <citation type="journal article" date="2010" name="PLoS ONE">
        <title>The complete genome sequence of Cupriavidus metallidurans strain CH34, a master survivalist in harsh and anthropogenic environments.</title>
        <authorList>
            <person name="Janssen P.J."/>
            <person name="Van Houdt R."/>
            <person name="Moors H."/>
            <person name="Monsieurs P."/>
            <person name="Morin N."/>
            <person name="Michaux A."/>
            <person name="Benotmane M.A."/>
            <person name="Leys N."/>
            <person name="Vallaeys T."/>
            <person name="Lapidus A."/>
            <person name="Monchy S."/>
            <person name="Medigue C."/>
            <person name="Taghavi S."/>
            <person name="McCorkle S."/>
            <person name="Dunn J."/>
            <person name="van der Lelie D."/>
            <person name="Mergeay M."/>
        </authorList>
    </citation>
    <scope>NUCLEOTIDE SEQUENCE [LARGE SCALE GENOMIC DNA]</scope>
    <source>
        <strain>ATCC 43123 / DSM 2839 / NBRC 102507 / CH34</strain>
    </source>
</reference>
<dbReference type="EMBL" id="CP000352">
    <property type="protein sequence ID" value="ABF07420.1"/>
    <property type="molecule type" value="Genomic_DNA"/>
</dbReference>
<dbReference type="RefSeq" id="WP_008644998.1">
    <property type="nucleotide sequence ID" value="NC_007973.1"/>
</dbReference>
<dbReference type="SMR" id="Q1LR06"/>
<dbReference type="STRING" id="266264.Rmet_0534"/>
<dbReference type="KEGG" id="rme:Rmet_0534"/>
<dbReference type="eggNOG" id="COG2835">
    <property type="taxonomic scope" value="Bacteria"/>
</dbReference>
<dbReference type="HOGENOM" id="CLU_155659_3_0_4"/>
<dbReference type="Proteomes" id="UP000002429">
    <property type="component" value="Chromosome"/>
</dbReference>
<dbReference type="GO" id="GO:0005829">
    <property type="term" value="C:cytosol"/>
    <property type="evidence" value="ECO:0007669"/>
    <property type="project" value="TreeGrafter"/>
</dbReference>
<dbReference type="FunFam" id="2.20.25.10:FF:000002">
    <property type="entry name" value="UPF0434 protein YcaR"/>
    <property type="match status" value="1"/>
</dbReference>
<dbReference type="Gene3D" id="2.20.25.10">
    <property type="match status" value="1"/>
</dbReference>
<dbReference type="HAMAP" id="MF_01187">
    <property type="entry name" value="UPF0434"/>
    <property type="match status" value="1"/>
</dbReference>
<dbReference type="InterPro" id="IPR005651">
    <property type="entry name" value="Trm112-like"/>
</dbReference>
<dbReference type="PANTHER" id="PTHR33505:SF4">
    <property type="entry name" value="PROTEIN PREY, MITOCHONDRIAL"/>
    <property type="match status" value="1"/>
</dbReference>
<dbReference type="PANTHER" id="PTHR33505">
    <property type="entry name" value="ZGC:162634"/>
    <property type="match status" value="1"/>
</dbReference>
<dbReference type="Pfam" id="PF03966">
    <property type="entry name" value="Trm112p"/>
    <property type="match status" value="1"/>
</dbReference>
<dbReference type="SUPFAM" id="SSF158997">
    <property type="entry name" value="Trm112p-like"/>
    <property type="match status" value="1"/>
</dbReference>
<keyword id="KW-1185">Reference proteome</keyword>
<gene>
    <name type="ordered locus">Rmet_0534</name>
</gene>
<accession>Q1LR06</accession>
<protein>
    <recommendedName>
        <fullName evidence="1">UPF0434 protein Rmet_0534</fullName>
    </recommendedName>
</protein>
<proteinExistence type="inferred from homology"/>
<sequence>MDNRLLEILVCPLCKGKLEYDRAAQELICHADKLAYPIRDGIPVMLADEARQTVPGRVVPVEPSAPAGN</sequence>
<evidence type="ECO:0000255" key="1">
    <source>
        <dbReference type="HAMAP-Rule" id="MF_01187"/>
    </source>
</evidence>
<organism>
    <name type="scientific">Cupriavidus metallidurans (strain ATCC 43123 / DSM 2839 / NBRC 102507 / CH34)</name>
    <name type="common">Ralstonia metallidurans</name>
    <dbReference type="NCBI Taxonomy" id="266264"/>
    <lineage>
        <taxon>Bacteria</taxon>
        <taxon>Pseudomonadati</taxon>
        <taxon>Pseudomonadota</taxon>
        <taxon>Betaproteobacteria</taxon>
        <taxon>Burkholderiales</taxon>
        <taxon>Burkholderiaceae</taxon>
        <taxon>Cupriavidus</taxon>
    </lineage>
</organism>
<name>Y534_CUPMC</name>